<organism>
    <name type="scientific">Neisseria meningitidis serogroup C / serotype 2a (strain ATCC 700532 / DSM 15464 / FAM18)</name>
    <dbReference type="NCBI Taxonomy" id="272831"/>
    <lineage>
        <taxon>Bacteria</taxon>
        <taxon>Pseudomonadati</taxon>
        <taxon>Pseudomonadota</taxon>
        <taxon>Betaproteobacteria</taxon>
        <taxon>Neisseriales</taxon>
        <taxon>Neisseriaceae</taxon>
        <taxon>Neisseria</taxon>
    </lineage>
</organism>
<sequence>MPAIRVKENEPFEVAMRRFKRAVEKTGLLTELRAREAYEKPTTERKRKKAAAVKRLQKRLRSQQLPPKMY</sequence>
<comment type="similarity">
    <text evidence="1">Belongs to the bacterial ribosomal protein bS21 family.</text>
</comment>
<accession>A1KW26</accession>
<name>RS21_NEIMF</name>
<keyword id="KW-0687">Ribonucleoprotein</keyword>
<keyword id="KW-0689">Ribosomal protein</keyword>
<dbReference type="EMBL" id="AM421808">
    <property type="protein sequence ID" value="CAM11082.1"/>
    <property type="molecule type" value="Genomic_DNA"/>
</dbReference>
<dbReference type="RefSeq" id="WP_002214819.1">
    <property type="nucleotide sequence ID" value="NC_008767.1"/>
</dbReference>
<dbReference type="SMR" id="A1KW26"/>
<dbReference type="GeneID" id="93386856"/>
<dbReference type="KEGG" id="nmc:NMC1921"/>
<dbReference type="HOGENOM" id="CLU_159258_1_1_4"/>
<dbReference type="Proteomes" id="UP000002286">
    <property type="component" value="Chromosome"/>
</dbReference>
<dbReference type="GO" id="GO:1990904">
    <property type="term" value="C:ribonucleoprotein complex"/>
    <property type="evidence" value="ECO:0007669"/>
    <property type="project" value="UniProtKB-KW"/>
</dbReference>
<dbReference type="GO" id="GO:0005840">
    <property type="term" value="C:ribosome"/>
    <property type="evidence" value="ECO:0007669"/>
    <property type="project" value="UniProtKB-KW"/>
</dbReference>
<dbReference type="GO" id="GO:0003735">
    <property type="term" value="F:structural constituent of ribosome"/>
    <property type="evidence" value="ECO:0007669"/>
    <property type="project" value="InterPro"/>
</dbReference>
<dbReference type="GO" id="GO:0006412">
    <property type="term" value="P:translation"/>
    <property type="evidence" value="ECO:0007669"/>
    <property type="project" value="UniProtKB-UniRule"/>
</dbReference>
<dbReference type="Gene3D" id="1.20.5.1150">
    <property type="entry name" value="Ribosomal protein S8"/>
    <property type="match status" value="1"/>
</dbReference>
<dbReference type="HAMAP" id="MF_00358">
    <property type="entry name" value="Ribosomal_bS21"/>
    <property type="match status" value="1"/>
</dbReference>
<dbReference type="InterPro" id="IPR001911">
    <property type="entry name" value="Ribosomal_bS21"/>
</dbReference>
<dbReference type="InterPro" id="IPR038380">
    <property type="entry name" value="Ribosomal_bS21_sf"/>
</dbReference>
<dbReference type="NCBIfam" id="TIGR00030">
    <property type="entry name" value="S21p"/>
    <property type="match status" value="1"/>
</dbReference>
<dbReference type="PANTHER" id="PTHR21109">
    <property type="entry name" value="MITOCHONDRIAL 28S RIBOSOMAL PROTEIN S21"/>
    <property type="match status" value="1"/>
</dbReference>
<dbReference type="PANTHER" id="PTHR21109:SF22">
    <property type="entry name" value="SMALL RIBOSOMAL SUBUNIT PROTEIN BS21"/>
    <property type="match status" value="1"/>
</dbReference>
<dbReference type="Pfam" id="PF01165">
    <property type="entry name" value="Ribosomal_S21"/>
    <property type="match status" value="1"/>
</dbReference>
<dbReference type="PRINTS" id="PR00976">
    <property type="entry name" value="RIBOSOMALS21"/>
</dbReference>
<proteinExistence type="inferred from homology"/>
<protein>
    <recommendedName>
        <fullName evidence="1">Small ribosomal subunit protein bS21</fullName>
    </recommendedName>
    <alternativeName>
        <fullName evidence="2">30S ribosomal protein S21</fullName>
    </alternativeName>
</protein>
<evidence type="ECO:0000255" key="1">
    <source>
        <dbReference type="HAMAP-Rule" id="MF_00358"/>
    </source>
</evidence>
<evidence type="ECO:0000305" key="2"/>
<reference key="1">
    <citation type="journal article" date="2007" name="PLoS Genet.">
        <title>Meningococcal genetic variation mechanisms viewed through comparative analysis of serogroup C strain FAM18.</title>
        <authorList>
            <person name="Bentley S.D."/>
            <person name="Vernikos G.S."/>
            <person name="Snyder L.A.S."/>
            <person name="Churcher C."/>
            <person name="Arrowsmith C."/>
            <person name="Chillingworth T."/>
            <person name="Cronin A."/>
            <person name="Davis P.H."/>
            <person name="Holroyd N.E."/>
            <person name="Jagels K."/>
            <person name="Maddison M."/>
            <person name="Moule S."/>
            <person name="Rabbinowitsch E."/>
            <person name="Sharp S."/>
            <person name="Unwin L."/>
            <person name="Whitehead S."/>
            <person name="Quail M.A."/>
            <person name="Achtman M."/>
            <person name="Barrell B.G."/>
            <person name="Saunders N.J."/>
            <person name="Parkhill J."/>
        </authorList>
    </citation>
    <scope>NUCLEOTIDE SEQUENCE [LARGE SCALE GENOMIC DNA]</scope>
    <source>
        <strain>ATCC 700532 / DSM 15464 / FAM18</strain>
    </source>
</reference>
<gene>
    <name evidence="1" type="primary">rpsU</name>
    <name type="ordered locus">NMC1921</name>
</gene>
<feature type="chain" id="PRO_1000005138" description="Small ribosomal subunit protein bS21">
    <location>
        <begin position="1"/>
        <end position="70"/>
    </location>
</feature>